<keyword id="KW-0007">Acetylation</keyword>
<keyword id="KW-0963">Cytoplasm</keyword>
<keyword id="KW-1017">Isopeptide bond</keyword>
<keyword id="KW-0539">Nucleus</keyword>
<keyword id="KW-0597">Phosphoprotein</keyword>
<keyword id="KW-1185">Reference proteome</keyword>
<keyword id="KW-0687">Ribonucleoprotein</keyword>
<keyword id="KW-0689">Ribosomal protein</keyword>
<keyword id="KW-0694">RNA-binding</keyword>
<keyword id="KW-0699">rRNA-binding</keyword>
<keyword id="KW-0832">Ubl conjugation</keyword>
<gene>
    <name type="primary">RPL11</name>
</gene>
<organism>
    <name type="scientific">Bos taurus</name>
    <name type="common">Bovine</name>
    <dbReference type="NCBI Taxonomy" id="9913"/>
    <lineage>
        <taxon>Eukaryota</taxon>
        <taxon>Metazoa</taxon>
        <taxon>Chordata</taxon>
        <taxon>Craniata</taxon>
        <taxon>Vertebrata</taxon>
        <taxon>Euteleostomi</taxon>
        <taxon>Mammalia</taxon>
        <taxon>Eutheria</taxon>
        <taxon>Laurasiatheria</taxon>
        <taxon>Artiodactyla</taxon>
        <taxon>Ruminantia</taxon>
        <taxon>Pecora</taxon>
        <taxon>Bovidae</taxon>
        <taxon>Bovinae</taxon>
        <taxon>Bos</taxon>
    </lineage>
</organism>
<dbReference type="EMBL" id="BC102524">
    <property type="protein sequence ID" value="AAI02525.1"/>
    <property type="molecule type" value="mRNA"/>
</dbReference>
<dbReference type="RefSeq" id="NP_001069049.1">
    <property type="nucleotide sequence ID" value="NM_001075581.2"/>
</dbReference>
<dbReference type="SMR" id="Q3T087"/>
<dbReference type="FunCoup" id="Q3T087">
    <property type="interactions" value="1844"/>
</dbReference>
<dbReference type="STRING" id="9913.ENSBTAP00000027850"/>
<dbReference type="PaxDb" id="9913-ENSBTAP00000027850"/>
<dbReference type="PeptideAtlas" id="Q3T087"/>
<dbReference type="GeneID" id="512745"/>
<dbReference type="KEGG" id="bta:512745"/>
<dbReference type="CTD" id="6135"/>
<dbReference type="eggNOG" id="KOG0397">
    <property type="taxonomic scope" value="Eukaryota"/>
</dbReference>
<dbReference type="HOGENOM" id="CLU_061015_3_0_1"/>
<dbReference type="InParanoid" id="Q3T087"/>
<dbReference type="OrthoDB" id="1734943at2759"/>
<dbReference type="TreeFam" id="TF300017"/>
<dbReference type="CD-CODE" id="D7FE2080">
    <property type="entry name" value="Nucleolus"/>
</dbReference>
<dbReference type="Proteomes" id="UP000009136">
    <property type="component" value="Unplaced"/>
</dbReference>
<dbReference type="GO" id="GO:0005737">
    <property type="term" value="C:cytoplasm"/>
    <property type="evidence" value="ECO:0000250"/>
    <property type="project" value="UniProtKB"/>
</dbReference>
<dbReference type="GO" id="GO:0022625">
    <property type="term" value="C:cytosolic large ribosomal subunit"/>
    <property type="evidence" value="ECO:0000318"/>
    <property type="project" value="GO_Central"/>
</dbReference>
<dbReference type="GO" id="GO:0005730">
    <property type="term" value="C:nucleolus"/>
    <property type="evidence" value="ECO:0000250"/>
    <property type="project" value="UniProtKB"/>
</dbReference>
<dbReference type="GO" id="GO:0005654">
    <property type="term" value="C:nucleoplasm"/>
    <property type="evidence" value="ECO:0000250"/>
    <property type="project" value="UniProtKB"/>
</dbReference>
<dbReference type="GO" id="GO:0003723">
    <property type="term" value="F:RNA binding"/>
    <property type="evidence" value="ECO:0000318"/>
    <property type="project" value="GO_Central"/>
</dbReference>
<dbReference type="GO" id="GO:0019843">
    <property type="term" value="F:rRNA binding"/>
    <property type="evidence" value="ECO:0007669"/>
    <property type="project" value="UniProtKB-KW"/>
</dbReference>
<dbReference type="GO" id="GO:0003735">
    <property type="term" value="F:structural constituent of ribosome"/>
    <property type="evidence" value="ECO:0000318"/>
    <property type="project" value="GO_Central"/>
</dbReference>
<dbReference type="GO" id="GO:0032435">
    <property type="term" value="P:negative regulation of proteasomal ubiquitin-dependent protein catabolic process"/>
    <property type="evidence" value="ECO:0000250"/>
    <property type="project" value="UniProtKB"/>
</dbReference>
<dbReference type="GO" id="GO:1901798">
    <property type="term" value="P:positive regulation of signal transduction by p53 class mediator"/>
    <property type="evidence" value="ECO:0000250"/>
    <property type="project" value="UniProtKB"/>
</dbReference>
<dbReference type="GO" id="GO:0034504">
    <property type="term" value="P:protein localization to nucleus"/>
    <property type="evidence" value="ECO:0000250"/>
    <property type="project" value="UniProtKB"/>
</dbReference>
<dbReference type="GO" id="GO:0006412">
    <property type="term" value="P:translation"/>
    <property type="evidence" value="ECO:0000318"/>
    <property type="project" value="GO_Central"/>
</dbReference>
<dbReference type="FunFam" id="3.30.1440.10:FF:000002">
    <property type="entry name" value="60S ribosomal protein L11"/>
    <property type="match status" value="1"/>
</dbReference>
<dbReference type="Gene3D" id="3.30.1440.10">
    <property type="match status" value="1"/>
</dbReference>
<dbReference type="InterPro" id="IPR002132">
    <property type="entry name" value="Ribosomal_uL5"/>
</dbReference>
<dbReference type="InterPro" id="IPR031309">
    <property type="entry name" value="Ribosomal_uL5_C"/>
</dbReference>
<dbReference type="InterPro" id="IPR020929">
    <property type="entry name" value="Ribosomal_uL5_CS"/>
</dbReference>
<dbReference type="InterPro" id="IPR022803">
    <property type="entry name" value="Ribosomal_uL5_dom_sf"/>
</dbReference>
<dbReference type="InterPro" id="IPR031310">
    <property type="entry name" value="Ribosomal_uL5_N"/>
</dbReference>
<dbReference type="NCBIfam" id="NF003258">
    <property type="entry name" value="PRK04219.1"/>
    <property type="match status" value="1"/>
</dbReference>
<dbReference type="PANTHER" id="PTHR11994">
    <property type="entry name" value="60S RIBOSOMAL PROTEIN L11-RELATED"/>
    <property type="match status" value="1"/>
</dbReference>
<dbReference type="Pfam" id="PF00281">
    <property type="entry name" value="Ribosomal_L5"/>
    <property type="match status" value="1"/>
</dbReference>
<dbReference type="Pfam" id="PF00673">
    <property type="entry name" value="Ribosomal_L5_C"/>
    <property type="match status" value="1"/>
</dbReference>
<dbReference type="PIRSF" id="PIRSF002161">
    <property type="entry name" value="Ribosomal_L5"/>
    <property type="match status" value="1"/>
</dbReference>
<dbReference type="SUPFAM" id="SSF55282">
    <property type="entry name" value="RL5-like"/>
    <property type="match status" value="1"/>
</dbReference>
<dbReference type="PROSITE" id="PS00358">
    <property type="entry name" value="RIBOSOMAL_L5"/>
    <property type="match status" value="1"/>
</dbReference>
<feature type="initiator methionine" description="Removed" evidence="1">
    <location>
        <position position="1"/>
    </location>
</feature>
<feature type="chain" id="PRO_0000240127" description="Large ribosomal subunit protein uL5">
    <location>
        <begin position="2"/>
        <end position="178"/>
    </location>
</feature>
<feature type="modified residue" description="N-acetylalanine" evidence="1">
    <location>
        <position position="2"/>
    </location>
</feature>
<feature type="modified residue" description="Phosphothreonine" evidence="1">
    <location>
        <position position="44"/>
    </location>
</feature>
<feature type="modified residue" description="Phosphothreonine" evidence="1">
    <location>
        <position position="47"/>
    </location>
</feature>
<feature type="modified residue" description="N6-acetyllysine; alternate" evidence="1">
    <location>
        <position position="52"/>
    </location>
</feature>
<feature type="modified residue" description="N6-acetyllysine" evidence="1">
    <location>
        <position position="85"/>
    </location>
</feature>
<feature type="cross-link" description="Glycyl lysine isopeptide (Lys-Gly) (interchain with G-Cter in SUMO2)" evidence="1">
    <location>
        <position position="38"/>
    </location>
</feature>
<feature type="cross-link" description="Glycyl lysine isopeptide (Lys-Gly) (interchain with G-Cter in SUMO2); alternate" evidence="1">
    <location>
        <position position="52"/>
    </location>
</feature>
<feature type="cross-link" description="Glycyl lysine isopeptide (Lys-Gly) (interchain with G-Cter in SUMO2)" evidence="1">
    <location>
        <position position="154"/>
    </location>
</feature>
<evidence type="ECO:0000250" key="1">
    <source>
        <dbReference type="UniProtKB" id="P62913"/>
    </source>
</evidence>
<evidence type="ECO:0000250" key="2">
    <source>
        <dbReference type="UniProtKB" id="Q9CXW4"/>
    </source>
</evidence>
<evidence type="ECO:0000305" key="3"/>
<protein>
    <recommendedName>
        <fullName evidence="3">Large ribosomal subunit protein uL5</fullName>
    </recommendedName>
    <alternativeName>
        <fullName>60S ribosomal protein L11</fullName>
    </alternativeName>
</protein>
<reference key="1">
    <citation type="submission" date="2005-08" db="EMBL/GenBank/DDBJ databases">
        <authorList>
            <consortium name="NIH - Mammalian Gene Collection (MGC) project"/>
        </authorList>
    </citation>
    <scope>NUCLEOTIDE SEQUENCE [LARGE SCALE MRNA]</scope>
    <source>
        <strain>Crossbred X Angus</strain>
        <tissue>Ileum</tissue>
    </source>
</reference>
<sequence length="178" mass="20252">MAQDQGEKENPMRELRIRKLCLNICVGESGDRLTRAAKVLEQLTGQTPVFSKARYTVRSFGIRRNEKIAVHCTVRGAKAEEILEKGLKVREYELRKNNFSDTGNFGFGIQEHIDLGIKYDPSIGIYGLDFYVVLGRPGFSIADKKRRTGCIGAKHRISKEEAMRWFQQKYDGIILPGK</sequence>
<accession>Q3T087</accession>
<comment type="function">
    <text evidence="1">Component of the ribosome, a large ribonucleoprotein complex responsible for the synthesis of proteins in the cell. The small ribosomal subunit (SSU) binds messenger RNAs (mRNAs) and translates the encoded message by selecting cognate aminoacyl-transfer RNA (tRNA) molecules. The large subunit (LSU) contains the ribosomal catalytic site termed the peptidyl transferase center (PTC), which catalyzes the formation of peptide bonds, thereby polymerizing the amino acids delivered by tRNAs into a polypeptide chain. The nascent polypeptides leave the ribosome through a tunnel in the LSU and interact with protein factors that function in enzymatic processing, targeting, and the membrane insertion of nascent chains at the exit of the ribosomal tunnel. As part of the 5S RNP/5S ribonucleoprotein particle it is an essential component of the LSU, required for its formation and the maturation of rRNAs. It also couples ribosome biogenesis to p53/TP53 activation. As part of the 5S RNP it accumulates in the nucleoplasm and inhibits MDM2, when ribosome biogenesis is perturbed, mediating the stabilization and the activation of TP53. Promotes nucleolar location of PML.</text>
</comment>
<comment type="subunit">
    <text evidence="1 2">Component of the large ribosomal subunit (LSU) (By similarity). Part of the 5S RNP complex, which is a LSU subcomplex composed of the 5S RNA, RPL5 and RPL11 (By similarity). Component of a hexameric 5S RNP precursor complex, composed of 5S RNA, RRS1, RPF2/BXDC1, RPL5, RPL11 and HEATR3; this complex acts as a precursor for ribosome assembly (By similarity). Interacts with PML (By similarity). Interacts with MDM2 (via its RanBP2-type zinc finger domain); negatively regulates MDM2-mediated TP53 ubiquitination and degradation (By similarity). Interacts with NOP53; retains RPL11 into the nucleolus (By similarity).</text>
</comment>
<comment type="subcellular location">
    <subcellularLocation>
        <location evidence="2">Nucleus</location>
        <location evidence="2">Nucleolus</location>
    </subcellularLocation>
    <subcellularLocation>
        <location evidence="2">Cytoplasm</location>
    </subcellularLocation>
</comment>
<comment type="similarity">
    <text evidence="3">Belongs to the universal ribosomal protein uL5 family.</text>
</comment>
<proteinExistence type="evidence at transcript level"/>
<name>RL11_BOVIN</name>